<protein>
    <recommendedName>
        <fullName>Phosphothreonine lyase OspF</fullName>
        <ecNumber>4.2.3.-</ecNumber>
    </recommendedName>
    <alternativeName>
        <fullName>Effector protein OspF</fullName>
    </alternativeName>
</protein>
<organism>
    <name type="scientific">Shigella boydii</name>
    <dbReference type="NCBI Taxonomy" id="621"/>
    <lineage>
        <taxon>Bacteria</taxon>
        <taxon>Pseudomonadati</taxon>
        <taxon>Pseudomonadota</taxon>
        <taxon>Gammaproteobacteria</taxon>
        <taxon>Enterobacterales</taxon>
        <taxon>Enterobacteriaceae</taxon>
        <taxon>Shigella</taxon>
    </lineage>
</organism>
<evidence type="ECO:0000250" key="1"/>
<evidence type="ECO:0000305" key="2"/>
<gene>
    <name type="primary">ospF</name>
</gene>
<keyword id="KW-0456">Lyase</keyword>
<keyword id="KW-0614">Plasmid</keyword>
<keyword id="KW-0964">Secreted</keyword>
<keyword id="KW-0843">Virulence</keyword>
<sequence length="170" mass="19585">PQMLSANERLKNNFNILYNQIRQYPAYYFKVASNVPTYSDICQFFSVMYQGFQIVNHSGDVFIHACRENPQSKGDFVGDKFHISIAREQVPLAFQILSGLLFSEDSPIDKWKITDMNRVSQQSRVGIGAQFTLYVKSDQECSQYSALLLHKIRQFIMCLESNLLRSKIAP</sequence>
<dbReference type="EC" id="4.2.3.-"/>
<dbReference type="EMBL" id="DQ362851">
    <property type="protein sequence ID" value="ABD37258.1"/>
    <property type="molecule type" value="Genomic_DNA"/>
</dbReference>
<dbReference type="EMBL" id="DQ362852">
    <property type="protein sequence ID" value="ABD37259.1"/>
    <property type="molecule type" value="Genomic_DNA"/>
</dbReference>
<dbReference type="EMBL" id="DQ362853">
    <property type="protein sequence ID" value="ABD37260.1"/>
    <property type="molecule type" value="Genomic_DNA"/>
</dbReference>
<dbReference type="EMBL" id="DQ362854">
    <property type="protein sequence ID" value="ABD37261.1"/>
    <property type="molecule type" value="Genomic_DNA"/>
</dbReference>
<dbReference type="EMBL" id="DQ362855">
    <property type="protein sequence ID" value="ABD37262.1"/>
    <property type="molecule type" value="Genomic_DNA"/>
</dbReference>
<dbReference type="EMBL" id="DQ362856">
    <property type="protein sequence ID" value="ABD37263.1"/>
    <property type="molecule type" value="Genomic_DNA"/>
</dbReference>
<dbReference type="EMBL" id="DQ362857">
    <property type="protein sequence ID" value="ABD37264.1"/>
    <property type="molecule type" value="Genomic_DNA"/>
</dbReference>
<dbReference type="EMBL" id="DQ362858">
    <property type="protein sequence ID" value="ABD37265.1"/>
    <property type="molecule type" value="Genomic_DNA"/>
</dbReference>
<dbReference type="EMBL" id="DQ362859">
    <property type="protein sequence ID" value="ABD37266.1"/>
    <property type="molecule type" value="Genomic_DNA"/>
</dbReference>
<dbReference type="EMBL" id="DQ362860">
    <property type="protein sequence ID" value="ABD37267.1"/>
    <property type="molecule type" value="Genomic_DNA"/>
</dbReference>
<dbReference type="EMBL" id="DQ362861">
    <property type="protein sequence ID" value="ABD37268.1"/>
    <property type="molecule type" value="Genomic_DNA"/>
</dbReference>
<dbReference type="EMBL" id="DQ362862">
    <property type="protein sequence ID" value="ABD37269.1"/>
    <property type="molecule type" value="Genomic_DNA"/>
</dbReference>
<dbReference type="EMBL" id="DQ362863">
    <property type="protein sequence ID" value="ABD37270.1"/>
    <property type="molecule type" value="Genomic_DNA"/>
</dbReference>
<dbReference type="SMR" id="Q2ET28"/>
<dbReference type="GO" id="GO:0005576">
    <property type="term" value="C:extracellular region"/>
    <property type="evidence" value="ECO:0007669"/>
    <property type="project" value="UniProtKB-SubCell"/>
</dbReference>
<dbReference type="GO" id="GO:0016829">
    <property type="term" value="F:lyase activity"/>
    <property type="evidence" value="ECO:0007669"/>
    <property type="project" value="UniProtKB-KW"/>
</dbReference>
<dbReference type="Gene3D" id="3.30.2430.10">
    <property type="entry name" value="phosphothreonine lyase"/>
    <property type="match status" value="1"/>
</dbReference>
<dbReference type="InterPro" id="IPR003519">
    <property type="entry name" value="OspF/SpvC"/>
</dbReference>
<dbReference type="InterPro" id="IPR038498">
    <property type="entry name" value="OspF/SpvC_sf"/>
</dbReference>
<dbReference type="NCBIfam" id="NF011781">
    <property type="entry name" value="PRK15245.1"/>
    <property type="match status" value="1"/>
</dbReference>
<dbReference type="Pfam" id="PF03536">
    <property type="entry name" value="VRP3"/>
    <property type="match status" value="1"/>
</dbReference>
<dbReference type="PRINTS" id="PR01342">
    <property type="entry name" value="SALVRPPROT"/>
</dbReference>
<feature type="chain" id="PRO_0000299350" description="Phosphothreonine lyase OspF">
    <location>
        <begin position="1" status="less than"/>
        <end position="170" status="greater than"/>
    </location>
</feature>
<feature type="active site" description="Proton donor" evidence="1">
    <location>
        <position position="82"/>
    </location>
</feature>
<feature type="active site" description="Proton acceptor" evidence="1">
    <location>
        <position position="112"/>
    </location>
</feature>
<feature type="non-terminal residue">
    <location>
        <position position="1"/>
    </location>
</feature>
<feature type="non-terminal residue">
    <location>
        <position position="170"/>
    </location>
</feature>
<accession>Q2ET28</accession>
<name>OSPF_SHIBO</name>
<geneLocation type="plasmid">
    <name>pSb17_G1214</name>
</geneLocation>
<geneLocation type="plasmid">
    <name>pSb2_G1184</name>
</geneLocation>
<geneLocation type="plasmid">
    <name>pSb3_G1232</name>
</geneLocation>
<geneLocation type="plasmid">
    <name>pSb6_G1227</name>
</geneLocation>
<geneLocation type="plasmid">
    <name>pSb7_G1187</name>
</geneLocation>
<geneLocation type="plasmid">
    <name>pSb8_G1268</name>
</geneLocation>
<geneLocation type="plasmid">
    <name>pSb9_G1236</name>
</geneLocation>
<geneLocation type="plasmid">
    <name>pSb1_G1228</name>
</geneLocation>
<geneLocation type="plasmid">
    <name>pSb10_G1294</name>
</geneLocation>
<geneLocation type="plasmid">
    <name>pSb11_G1191</name>
</geneLocation>
<geneLocation type="plasmid">
    <name>pSb12_G1287</name>
</geneLocation>
<geneLocation type="plasmid">
    <name>pSb14_G1300</name>
</geneLocation>
<geneLocation type="plasmid">
    <name>pSb15_G1282</name>
</geneLocation>
<comment type="function">
    <text evidence="1">Catalyzes the removal of the phosphate group from the phosphothreonine in the mitogen-activated protein kinases such as MAPK2/ERK2, MAPK3/ERK1, MAPK8 and MAPK14 in an irreversible reaction, thus preventing the downstream phosphorylation of histone H3. This epigenetic modification results in inhibition of the transcription of a specific subset of pro-inflammatory genes, and ultimately to a reduced immune response against the invading pathogen. The diminished immune response enhances the bacterium's ability to disseminate and multiply within the host (By similarity).</text>
</comment>
<comment type="subcellular location">
    <subcellularLocation>
        <location>Secreted</location>
    </subcellularLocation>
    <text evidence="1">Secreted via the type III secretion system (T3SS). Localizes in the nucleus of the infected cell (By similarity).</text>
</comment>
<comment type="similarity">
    <text evidence="2">Belongs to the phosphothreonine lyase family.</text>
</comment>
<reference key="1">
    <citation type="journal article" date="2007" name="J. Mol. Evol.">
        <title>Revisiting the molecular evolutionary history of Shigella spp.</title>
        <authorList>
            <person name="Yang J."/>
            <person name="Nie H."/>
            <person name="Chen L."/>
            <person name="Zhang X."/>
            <person name="Yang F."/>
            <person name="Xu X."/>
            <person name="Zhu Y."/>
            <person name="Yu J."/>
            <person name="Jin Q."/>
        </authorList>
    </citation>
    <scope>NUCLEOTIDE SEQUENCE [GENOMIC DNA]</scope>
    <source>
        <strain>G1184 / Serotype 2</strain>
        <strain>G1187 / Serotype 7</strain>
        <strain>G1191 / Serotype 11</strain>
        <strain>G1214 / Serotype 17</strain>
        <strain>G1227 / Serotype 6</strain>
        <strain>G1228 / Serotype 1</strain>
        <strain>G1232 / Serotype 3</strain>
        <strain>G1236 / Serotype 9</strain>
        <strain>G1268 / Serotype 8</strain>
        <strain>G1282 / Serotype 15</strain>
        <strain>G1287 / Serotype 12</strain>
        <strain>G1294 / Serotype 10</strain>
        <strain>G1300 / Serotype 14</strain>
        <plasmid>pSb10_G1294</plasmid>
        <plasmid>pSb11_G1191</plasmid>
        <plasmid>pSb12_G1287</plasmid>
        <plasmid>pSb14_G1300</plasmid>
        <plasmid>pSb15_G1282</plasmid>
        <plasmid>pSb17_G1214</plasmid>
        <plasmid>pSb1_G1228</plasmid>
        <plasmid>pSb2_G1184</plasmid>
        <plasmid>pSb3_G1232</plasmid>
        <plasmid>pSb6_G1227</plasmid>
        <plasmid>pSb7_G1187</plasmid>
        <plasmid>pSb8_G1268</plasmid>
        <plasmid>pSb9_G1236</plasmid>
    </source>
</reference>
<proteinExistence type="inferred from homology"/>